<comment type="function">
    <text evidence="2">Destroys superoxide anion radicals which are normally produced within the cells and which are toxic to biological systems. Catalyzes the dismutation of superoxide anion radicals into O2 and H2O2 by successive reduction and oxidation of the transition metal ion at the active site.</text>
</comment>
<comment type="catalytic activity">
    <reaction evidence="2">
        <text>2 superoxide + 2 H(+) = H2O2 + O2</text>
        <dbReference type="Rhea" id="RHEA:20696"/>
        <dbReference type="ChEBI" id="CHEBI:15378"/>
        <dbReference type="ChEBI" id="CHEBI:15379"/>
        <dbReference type="ChEBI" id="CHEBI:16240"/>
        <dbReference type="ChEBI" id="CHEBI:18421"/>
        <dbReference type="EC" id="1.15.1.1"/>
    </reaction>
    <physiologicalReaction direction="left-to-right" evidence="2">
        <dbReference type="Rhea" id="RHEA:20697"/>
    </physiologicalReaction>
</comment>
<comment type="cofactor">
    <cofactor evidence="2">
        <name>Mn(2+)</name>
        <dbReference type="ChEBI" id="CHEBI:29035"/>
    </cofactor>
    <cofactor evidence="2">
        <name>Fe(3+)</name>
        <dbReference type="ChEBI" id="CHEBI:29034"/>
    </cofactor>
    <text evidence="2">Binds 1 Mn(2+) or Fe(3+) ion per subunit.</text>
</comment>
<comment type="similarity">
    <text evidence="3">Belongs to the iron/manganese superoxide dismutase family.</text>
</comment>
<dbReference type="EC" id="1.15.1.1" evidence="2"/>
<dbReference type="EMBL" id="Z95893">
    <property type="protein sequence ID" value="CAB09346.1"/>
    <property type="molecule type" value="Genomic_DNA"/>
</dbReference>
<dbReference type="EMBL" id="Z99180">
    <property type="protein sequence ID" value="CAB16324.1"/>
    <property type="molecule type" value="Genomic_DNA"/>
</dbReference>
<dbReference type="PIR" id="S54792">
    <property type="entry name" value="S54792"/>
</dbReference>
<dbReference type="RefSeq" id="WP_000974719.1">
    <property type="nucleotide sequence ID" value="NZ_WNJJ01000001.1"/>
</dbReference>
<dbReference type="SMR" id="P0A4J5"/>
<dbReference type="OMA" id="DSLINWD"/>
<dbReference type="GO" id="GO:0005737">
    <property type="term" value="C:cytoplasm"/>
    <property type="evidence" value="ECO:0007669"/>
    <property type="project" value="TreeGrafter"/>
</dbReference>
<dbReference type="GO" id="GO:0046872">
    <property type="term" value="F:metal ion binding"/>
    <property type="evidence" value="ECO:0007669"/>
    <property type="project" value="UniProtKB-KW"/>
</dbReference>
<dbReference type="GO" id="GO:0004784">
    <property type="term" value="F:superoxide dismutase activity"/>
    <property type="evidence" value="ECO:0007669"/>
    <property type="project" value="UniProtKB-EC"/>
</dbReference>
<dbReference type="FunFam" id="1.10.287.990:FF:000001">
    <property type="entry name" value="Superoxide dismutase"/>
    <property type="match status" value="1"/>
</dbReference>
<dbReference type="FunFam" id="3.55.40.20:FF:000001">
    <property type="entry name" value="Superoxide dismutase"/>
    <property type="match status" value="1"/>
</dbReference>
<dbReference type="Gene3D" id="1.10.287.990">
    <property type="entry name" value="Fe,Mn superoxide dismutase (SOD) domain"/>
    <property type="match status" value="1"/>
</dbReference>
<dbReference type="Gene3D" id="3.55.40.20">
    <property type="entry name" value="Iron/manganese superoxide dismutase, C-terminal domain"/>
    <property type="match status" value="1"/>
</dbReference>
<dbReference type="InterPro" id="IPR001189">
    <property type="entry name" value="Mn/Fe_SOD"/>
</dbReference>
<dbReference type="InterPro" id="IPR019833">
    <property type="entry name" value="Mn/Fe_SOD_BS"/>
</dbReference>
<dbReference type="InterPro" id="IPR019832">
    <property type="entry name" value="Mn/Fe_SOD_C"/>
</dbReference>
<dbReference type="InterPro" id="IPR019831">
    <property type="entry name" value="Mn/Fe_SOD_N"/>
</dbReference>
<dbReference type="InterPro" id="IPR036324">
    <property type="entry name" value="Mn/Fe_SOD_N_sf"/>
</dbReference>
<dbReference type="InterPro" id="IPR036314">
    <property type="entry name" value="SOD_C_sf"/>
</dbReference>
<dbReference type="PANTHER" id="PTHR43595">
    <property type="entry name" value="37S RIBOSOMAL PROTEIN S26, MITOCHONDRIAL"/>
    <property type="match status" value="1"/>
</dbReference>
<dbReference type="PANTHER" id="PTHR43595:SF2">
    <property type="entry name" value="SMALL RIBOSOMAL SUBUNIT PROTEIN MS42"/>
    <property type="match status" value="1"/>
</dbReference>
<dbReference type="Pfam" id="PF02777">
    <property type="entry name" value="Sod_Fe_C"/>
    <property type="match status" value="1"/>
</dbReference>
<dbReference type="Pfam" id="PF00081">
    <property type="entry name" value="Sod_Fe_N"/>
    <property type="match status" value="1"/>
</dbReference>
<dbReference type="PIRSF" id="PIRSF000349">
    <property type="entry name" value="SODismutase"/>
    <property type="match status" value="1"/>
</dbReference>
<dbReference type="PRINTS" id="PR01703">
    <property type="entry name" value="MNSODISMTASE"/>
</dbReference>
<dbReference type="SUPFAM" id="SSF54719">
    <property type="entry name" value="Fe,Mn superoxide dismutase (SOD), C-terminal domain"/>
    <property type="match status" value="1"/>
</dbReference>
<dbReference type="SUPFAM" id="SSF46609">
    <property type="entry name" value="Fe,Mn superoxide dismutase (SOD), N-terminal domain"/>
    <property type="match status" value="1"/>
</dbReference>
<dbReference type="PROSITE" id="PS00088">
    <property type="entry name" value="SOD_MN"/>
    <property type="match status" value="1"/>
</dbReference>
<name>SODM_STRAG</name>
<gene>
    <name type="primary">sodA</name>
    <name type="synonym">sod</name>
</gene>
<evidence type="ECO:0000250" key="1"/>
<evidence type="ECO:0000250" key="2">
    <source>
        <dbReference type="UniProtKB" id="P80293"/>
    </source>
</evidence>
<evidence type="ECO:0000305" key="3"/>
<reference key="1">
    <citation type="journal article" date="1998" name="J. Clin. Microbiol.">
        <title>Identification of streptococci to species level by sequencing the gene encoding the manganese-dependent superoxide dismutase.</title>
        <authorList>
            <person name="Poyart C."/>
            <person name="Quesne G."/>
            <person name="Coulon S."/>
            <person name="Berche P."/>
            <person name="Trieu-Cuot P."/>
        </authorList>
    </citation>
    <scope>NUCLEOTIDE SEQUENCE [GENOMIC DNA] OF 18-162</scope>
    <source>
        <strain>ATCC 13813 / CIP 103227 / DSM 2134 / JCM 5671 / NCTC 8181</strain>
        <strain>NEM1317</strain>
    </source>
</reference>
<protein>
    <recommendedName>
        <fullName>Superoxide dismutase [Mn/Fe]</fullName>
        <ecNumber evidence="2">1.15.1.1</ecNumber>
    </recommendedName>
</protein>
<accession>P0A4J5</accession>
<accession>O33604</accession>
<accession>O54086</accession>
<accession>O54091</accession>
<accession>Q59799</accession>
<organism>
    <name type="scientific">Streptococcus agalactiae</name>
    <dbReference type="NCBI Taxonomy" id="1311"/>
    <lineage>
        <taxon>Bacteria</taxon>
        <taxon>Bacillati</taxon>
        <taxon>Bacillota</taxon>
        <taxon>Bacilli</taxon>
        <taxon>Lactobacillales</taxon>
        <taxon>Streptococcaceae</taxon>
        <taxon>Streptococcus</taxon>
    </lineage>
</organism>
<feature type="initiator methionine" description="Removed" evidence="1">
    <location>
        <position position="1"/>
    </location>
</feature>
<feature type="chain" id="PRO_0000160085" description="Superoxide dismutase [Mn/Fe]">
    <location>
        <begin position="2"/>
        <end position="202"/>
    </location>
</feature>
<feature type="binding site" evidence="2">
    <location>
        <position position="27"/>
    </location>
    <ligand>
        <name>Fe(3+)</name>
        <dbReference type="ChEBI" id="CHEBI:29034"/>
    </ligand>
</feature>
<feature type="binding site" evidence="2">
    <location>
        <position position="27"/>
    </location>
    <ligand>
        <name>Mn(2+)</name>
        <dbReference type="ChEBI" id="CHEBI:29035"/>
    </ligand>
</feature>
<feature type="binding site" evidence="2">
    <location>
        <position position="81"/>
    </location>
    <ligand>
        <name>Fe(3+)</name>
        <dbReference type="ChEBI" id="CHEBI:29034"/>
    </ligand>
</feature>
<feature type="binding site" evidence="2">
    <location>
        <position position="81"/>
    </location>
    <ligand>
        <name>Mn(2+)</name>
        <dbReference type="ChEBI" id="CHEBI:29035"/>
    </ligand>
</feature>
<feature type="binding site" evidence="2">
    <location>
        <position position="163"/>
    </location>
    <ligand>
        <name>Fe(3+)</name>
        <dbReference type="ChEBI" id="CHEBI:29034"/>
    </ligand>
</feature>
<feature type="binding site" evidence="2">
    <location>
        <position position="163"/>
    </location>
    <ligand>
        <name>Mn(2+)</name>
        <dbReference type="ChEBI" id="CHEBI:29035"/>
    </ligand>
</feature>
<feature type="binding site" evidence="2">
    <location>
        <position position="167"/>
    </location>
    <ligand>
        <name>Fe(3+)</name>
        <dbReference type="ChEBI" id="CHEBI:29034"/>
    </ligand>
</feature>
<feature type="binding site" evidence="2">
    <location>
        <position position="167"/>
    </location>
    <ligand>
        <name>Mn(2+)</name>
        <dbReference type="ChEBI" id="CHEBI:29035"/>
    </ligand>
</feature>
<feature type="sequence variant" description="In strain: ATCC 13813.">
    <original>V</original>
    <variation>I</variation>
    <location>
        <position position="60"/>
    </location>
</feature>
<feature type="sequence variant" description="In strain: ATCC 13813.">
    <original>E</original>
    <variation>D</variation>
    <location>
        <position position="98"/>
    </location>
</feature>
<feature type="sequence variant" description="In strain: ATCC 13813.">
    <original>N</original>
    <variation>D</variation>
    <location>
        <position position="104"/>
    </location>
</feature>
<sequence length="202" mass="22621">MAIILPDLPYAYDALEPHIDAETMTLHHDKHHATYVANANAALEKHPEIGEDLEALLADVSQIPEDIRQAVINNGGGHLNHALFWELMSPEETQISQELSEDINATFGSFEDFKAAFTAAATGRFGSGWAWLVVNAEGKLEVLSTANQDTPIMEGKKPILGLDVWEHAYYLNYRNVRPNYIKAFFEIINWNKVNELYQAAKA</sequence>
<keyword id="KW-0408">Iron</keyword>
<keyword id="KW-0464">Manganese</keyword>
<keyword id="KW-0479">Metal-binding</keyword>
<keyword id="KW-0560">Oxidoreductase</keyword>
<proteinExistence type="inferred from homology"/>